<name>LIM3_LILLO</name>
<protein>
    <recommendedName>
        <fullName>Protein LIM3</fullName>
    </recommendedName>
</protein>
<reference key="1">
    <citation type="journal article" date="1994" name="DNA Res.">
        <title>Characterization of cDNAs induced in meiotic prophase in lily microsporocytes.</title>
        <authorList>
            <person name="Kobayashi T."/>
            <person name="Kobayashi E."/>
            <person name="Sato S."/>
            <person name="Hotta Y."/>
            <person name="Miyajima N."/>
            <person name="Tanaka A."/>
            <person name="Tabata S."/>
        </authorList>
    </citation>
    <scope>NUCLEOTIDE SEQUENCE [MRNA]</scope>
    <source>
        <tissue>Flower bud</tissue>
    </source>
</reference>
<proteinExistence type="inferred from homology"/>
<comment type="subcellular location">
    <subcellularLocation>
        <location evidence="3">Secreted</location>
    </subcellularLocation>
</comment>
<comment type="similarity">
    <text evidence="3">Belongs to the A9/FIL1 family.</text>
</comment>
<dbReference type="EMBL" id="D21809">
    <property type="protein sequence ID" value="BAA04833.1"/>
    <property type="molecule type" value="mRNA"/>
</dbReference>
<dbReference type="PIR" id="PC2138">
    <property type="entry name" value="PC2138"/>
</dbReference>
<dbReference type="SMR" id="Q40227"/>
<dbReference type="GO" id="GO:0005576">
    <property type="term" value="C:extracellular region"/>
    <property type="evidence" value="ECO:0007669"/>
    <property type="project" value="UniProtKB-SubCell"/>
</dbReference>
<dbReference type="CDD" id="cd04660">
    <property type="entry name" value="nsLTP_like"/>
    <property type="match status" value="1"/>
</dbReference>
<dbReference type="Gene3D" id="1.10.110.10">
    <property type="entry name" value="Plant lipid-transfer and hydrophobic proteins"/>
    <property type="match status" value="1"/>
</dbReference>
<dbReference type="InterPro" id="IPR036312">
    <property type="entry name" value="Bifun_inhib/LTP/seed_sf"/>
</dbReference>
<dbReference type="InterPro" id="IPR016140">
    <property type="entry name" value="Bifunc_inhib/LTP/seed_store"/>
</dbReference>
<dbReference type="InterPro" id="IPR044741">
    <property type="entry name" value="NsLTP-like"/>
</dbReference>
<dbReference type="PANTHER" id="PTHR35501">
    <property type="entry name" value="PROTEIN YY1"/>
    <property type="match status" value="1"/>
</dbReference>
<dbReference type="PANTHER" id="PTHR35501:SF3">
    <property type="entry name" value="PROTEIN YY1"/>
    <property type="match status" value="1"/>
</dbReference>
<dbReference type="Pfam" id="PF14368">
    <property type="entry name" value="LTP_2"/>
    <property type="match status" value="1"/>
</dbReference>
<dbReference type="SMART" id="SM00499">
    <property type="entry name" value="AAI"/>
    <property type="match status" value="1"/>
</dbReference>
<dbReference type="SUPFAM" id="SSF47699">
    <property type="entry name" value="Bifunctional inhibitor/lipid-transfer protein/seed storage 2S albumin"/>
    <property type="match status" value="1"/>
</dbReference>
<sequence>MAAVKFLVCSVLLVVLATQSEIGLAQNCSAAIGGLMSCGPYVLPGNQLTPSTQCCSAIQAVNHGCLCETINIISSLPGHCSLPPVSCGTA</sequence>
<accession>Q40227</accession>
<evidence type="ECO:0000250" key="1"/>
<evidence type="ECO:0000255" key="2"/>
<evidence type="ECO:0000305" key="3"/>
<organism>
    <name type="scientific">Lilium longiflorum</name>
    <name type="common">Trumpet lily</name>
    <dbReference type="NCBI Taxonomy" id="4690"/>
    <lineage>
        <taxon>Eukaryota</taxon>
        <taxon>Viridiplantae</taxon>
        <taxon>Streptophyta</taxon>
        <taxon>Embryophyta</taxon>
        <taxon>Tracheophyta</taxon>
        <taxon>Spermatophyta</taxon>
        <taxon>Magnoliopsida</taxon>
        <taxon>Liliopsida</taxon>
        <taxon>Liliales</taxon>
        <taxon>Liliaceae</taxon>
        <taxon>Lilium</taxon>
    </lineage>
</organism>
<keyword id="KW-1015">Disulfide bond</keyword>
<keyword id="KW-0964">Secreted</keyword>
<keyword id="KW-0732">Signal</keyword>
<feature type="signal peptide" evidence="2">
    <location>
        <begin position="1"/>
        <end position="26"/>
    </location>
</feature>
<feature type="chain" id="PRO_0000000237" description="Protein LIM3">
    <location>
        <begin position="27"/>
        <end position="90"/>
    </location>
</feature>
<feature type="disulfide bond" evidence="1">
    <location>
        <begin position="28"/>
        <end position="65"/>
    </location>
</feature>
<feature type="disulfide bond" evidence="1">
    <location>
        <begin position="38"/>
        <end position="54"/>
    </location>
</feature>
<feature type="disulfide bond" evidence="1">
    <location>
        <begin position="55"/>
        <end position="80"/>
    </location>
</feature>
<feature type="disulfide bond" evidence="1">
    <location>
        <begin position="67"/>
        <end position="87"/>
    </location>
</feature>
<gene>
    <name type="primary">LIM3</name>
</gene>